<name>RLIG_THEA1</name>
<gene>
    <name evidence="3" type="ordered locus">Theam_0167</name>
</gene>
<accession>E8T3K9</accession>
<protein>
    <recommendedName>
        <fullName evidence="2">Putative RNA ligase</fullName>
        <ecNumber evidence="1">6.5.1.-</ecNumber>
    </recommendedName>
    <alternativeName>
        <fullName evidence="2">T4 Rnl1-like protein</fullName>
    </alternativeName>
</protein>
<proteinExistence type="evidence at protein level"/>
<feature type="chain" id="PRO_0000456725" description="Putative RNA ligase">
    <location>
        <begin position="1"/>
        <end position="380"/>
    </location>
</feature>
<dbReference type="EC" id="6.5.1.-" evidence="1"/>
<dbReference type="EMBL" id="CP002444">
    <property type="protein sequence ID" value="ADU96140.1"/>
    <property type="molecule type" value="Genomic_DNA"/>
</dbReference>
<dbReference type="RefSeq" id="WP_013536926.1">
    <property type="nucleotide sequence ID" value="NC_014926.1"/>
</dbReference>
<dbReference type="SMR" id="E8T3K9"/>
<dbReference type="STRING" id="648996.Theam_0167"/>
<dbReference type="KEGG" id="tam:Theam_0167"/>
<dbReference type="eggNOG" id="COG0639">
    <property type="taxonomic scope" value="Bacteria"/>
</dbReference>
<dbReference type="HOGENOM" id="CLU_727469_0_0_0"/>
<dbReference type="OrthoDB" id="1310645at2"/>
<dbReference type="Proteomes" id="UP000006362">
    <property type="component" value="Chromosome"/>
</dbReference>
<dbReference type="GO" id="GO:0016874">
    <property type="term" value="F:ligase activity"/>
    <property type="evidence" value="ECO:0007669"/>
    <property type="project" value="UniProtKB-KW"/>
</dbReference>
<dbReference type="InterPro" id="IPR019039">
    <property type="entry name" value="T4-Rnl1-like_N"/>
</dbReference>
<dbReference type="Pfam" id="PF09511">
    <property type="entry name" value="RNA_lig_T4_1"/>
    <property type="match status" value="1"/>
</dbReference>
<sequence length="380" mass="44560">MEITLEKALKEIEGNKFFKVLKENDLVKVSYRFNAPQTFDTPLKRELRGITFSSKTGRVVSRPFHKFFNLGEHPETEKERLKGKLFILREKLDGTMLHPAVVEGRVRLFTQKDFANPQIEKGEELLRRNDKLLKATRRLLEKGLTPIFELISPEFQLVIPYETEELILTEVRDNRTGHYLLEEAENELIQMGFKLPRKRVGTVEEAERLIEEAENVEGFVAKNFDESEPFPLFVKIKSPWYHRAHYAFTYLHNIPDHKLFNLFLNNRADDIFATVTNPAVKEKKSRRLKILTDIYHSLLSSAEKLSQLYGKVKEETLKAEAQKELKKIEREFKEELKLFNFPVEHLTEAARLAKQKKKFDKFLGTKLYTALKHQTVKLKT</sequence>
<reference evidence="4" key="1">
    <citation type="submission" date="2011-01" db="EMBL/GenBank/DDBJ databases">
        <title>Complete sequence of chromosome of Thermovibrio ammonificans HB-1.</title>
        <authorList>
            <consortium name="US DOE Joint Genome Institute"/>
            <person name="Lucas S."/>
            <person name="Copeland A."/>
            <person name="Lapidus A."/>
            <person name="Cheng J.-F."/>
            <person name="Goodwin L."/>
            <person name="Pitluck S."/>
            <person name="Davenport K."/>
            <person name="Detter J.C."/>
            <person name="Han C."/>
            <person name="Tapia R."/>
            <person name="Land M."/>
            <person name="Hauser L."/>
            <person name="Kyrpides N."/>
            <person name="Ivanova N."/>
            <person name="Ovchinnikova G."/>
            <person name="Vetriani C."/>
            <person name="Woyke T."/>
        </authorList>
    </citation>
    <scope>NUCLEOTIDE SEQUENCE [LARGE SCALE GENOMIC DNA]</scope>
    <source>
        <strain evidence="4">DSM 15698 / JCM 12110 / HB-1</strain>
    </source>
</reference>
<reference key="2">
    <citation type="journal article" date="2014" name="J. Biol. Chem.">
        <title>Polynucleotide 3'-terminal phosphate modifications by RNA and DNA ligases.</title>
        <authorList>
            <person name="Zhelkovsky A.M."/>
            <person name="McReynolds L.A."/>
        </authorList>
    </citation>
    <scope>FUNCTION</scope>
    <scope>CATALYTIC ACTIVITY</scope>
</reference>
<evidence type="ECO:0000269" key="1">
    <source>
    </source>
</evidence>
<evidence type="ECO:0000303" key="2">
    <source>
    </source>
</evidence>
<evidence type="ECO:0000312" key="3">
    <source>
        <dbReference type="EMBL" id="ADU96140.1"/>
    </source>
</evidence>
<evidence type="ECO:0000312" key="4">
    <source>
        <dbReference type="Proteomes" id="UP000006362"/>
    </source>
</evidence>
<comment type="function">
    <text evidence="1 2">Putative RNA ligase (PubMed:25324547). Is able to catalyze the adenylation reaction of ssDNA 3'-terminal phosphate (ssDNA 3'p) to 3'-adenylated DNA (ssDNA 3'pp5'A) (PubMed:25324547).</text>
</comment>
<organism evidence="4">
    <name type="scientific">Thermovibrio ammonificans (strain DSM 15698 / JCM 12110 / HB-1)</name>
    <dbReference type="NCBI Taxonomy" id="648996"/>
    <lineage>
        <taxon>Bacteria</taxon>
        <taxon>Pseudomonadati</taxon>
        <taxon>Aquificota</taxon>
        <taxon>Aquificia</taxon>
        <taxon>Desulfurobacteriales</taxon>
        <taxon>Desulfurobacteriaceae</taxon>
        <taxon>Thermovibrio</taxon>
    </lineage>
</organism>
<keyword id="KW-0436">Ligase</keyword>